<sequence length="86" mass="10134">MKQTMYKPKRSFRRNLTPIRRHLSPIGSGDRIDYKNMSLISRFISEQGXILSGRVNRLTSKQQRLMTNAIKRARILSLLPFLYNEN</sequence>
<proteinExistence type="inferred from homology"/>
<geneLocation type="chloroplast"/>
<organism>
    <name type="scientific">Pseudotsuga menziesii</name>
    <name type="common">Douglas-fir</name>
    <name type="synonym">Abies menziesii</name>
    <dbReference type="NCBI Taxonomy" id="3357"/>
    <lineage>
        <taxon>Eukaryota</taxon>
        <taxon>Viridiplantae</taxon>
        <taxon>Streptophyta</taxon>
        <taxon>Embryophyta</taxon>
        <taxon>Tracheophyta</taxon>
        <taxon>Spermatophyta</taxon>
        <taxon>Pinopsida</taxon>
        <taxon>Pinidae</taxon>
        <taxon>Conifers I</taxon>
        <taxon>Pinales</taxon>
        <taxon>Pinaceae</taxon>
        <taxon>Pseudotsuga</taxon>
    </lineage>
</organism>
<name>RR18_PSEMZ</name>
<evidence type="ECO:0000255" key="1">
    <source>
        <dbReference type="HAMAP-Rule" id="MF_00270"/>
    </source>
</evidence>
<evidence type="ECO:0000305" key="2"/>
<feature type="chain" id="PRO_0000111307" description="Small ribosomal subunit protein bS18c">
    <location>
        <begin position="1"/>
        <end position="86"/>
    </location>
</feature>
<protein>
    <recommendedName>
        <fullName evidence="1">Small ribosomal subunit protein bS18c</fullName>
    </recommendedName>
    <alternativeName>
        <fullName evidence="2">30S ribosomal protein S18, chloroplastic</fullName>
    </alternativeName>
</protein>
<reference key="1">
    <citation type="journal article" date="2003" name="Mol. Phylogenet. Evol.">
        <title>Conflicting phylogenies of Larix (Pinaceae) based on cytoplasmic and nuclear DNA.</title>
        <authorList>
            <person name="Semerikov V.L."/>
            <person name="Zhang H."/>
            <person name="Sun M."/>
            <person name="Lascoux M."/>
        </authorList>
    </citation>
    <scope>NUCLEOTIDE SEQUENCE [GENOMIC DNA]</scope>
</reference>
<dbReference type="EMBL" id="AY131259">
    <property type="protein sequence ID" value="AAN18254.1"/>
    <property type="molecule type" value="Genomic_DNA"/>
</dbReference>
<dbReference type="GO" id="GO:0009507">
    <property type="term" value="C:chloroplast"/>
    <property type="evidence" value="ECO:0007669"/>
    <property type="project" value="UniProtKB-SubCell"/>
</dbReference>
<dbReference type="GO" id="GO:0005763">
    <property type="term" value="C:mitochondrial small ribosomal subunit"/>
    <property type="evidence" value="ECO:0007669"/>
    <property type="project" value="TreeGrafter"/>
</dbReference>
<dbReference type="GO" id="GO:0070181">
    <property type="term" value="F:small ribosomal subunit rRNA binding"/>
    <property type="evidence" value="ECO:0007669"/>
    <property type="project" value="TreeGrafter"/>
</dbReference>
<dbReference type="GO" id="GO:0003735">
    <property type="term" value="F:structural constituent of ribosome"/>
    <property type="evidence" value="ECO:0007669"/>
    <property type="project" value="InterPro"/>
</dbReference>
<dbReference type="GO" id="GO:0006412">
    <property type="term" value="P:translation"/>
    <property type="evidence" value="ECO:0007669"/>
    <property type="project" value="UniProtKB-UniRule"/>
</dbReference>
<dbReference type="FunFam" id="4.10.640.10:FF:000002">
    <property type="entry name" value="30S ribosomal protein S18, chloroplastic"/>
    <property type="match status" value="1"/>
</dbReference>
<dbReference type="Gene3D" id="4.10.640.10">
    <property type="entry name" value="Ribosomal protein S18"/>
    <property type="match status" value="1"/>
</dbReference>
<dbReference type="HAMAP" id="MF_00270">
    <property type="entry name" value="Ribosomal_bS18"/>
    <property type="match status" value="1"/>
</dbReference>
<dbReference type="InterPro" id="IPR001648">
    <property type="entry name" value="Ribosomal_bS18"/>
</dbReference>
<dbReference type="InterPro" id="IPR036870">
    <property type="entry name" value="Ribosomal_bS18_sf"/>
</dbReference>
<dbReference type="NCBIfam" id="TIGR00165">
    <property type="entry name" value="S18"/>
    <property type="match status" value="1"/>
</dbReference>
<dbReference type="PANTHER" id="PTHR13479">
    <property type="entry name" value="30S RIBOSOMAL PROTEIN S18"/>
    <property type="match status" value="1"/>
</dbReference>
<dbReference type="PANTHER" id="PTHR13479:SF40">
    <property type="entry name" value="SMALL RIBOSOMAL SUBUNIT PROTEIN BS18M"/>
    <property type="match status" value="1"/>
</dbReference>
<dbReference type="Pfam" id="PF01084">
    <property type="entry name" value="Ribosomal_S18"/>
    <property type="match status" value="1"/>
</dbReference>
<dbReference type="PRINTS" id="PR00974">
    <property type="entry name" value="RIBOSOMALS18"/>
</dbReference>
<dbReference type="SUPFAM" id="SSF46911">
    <property type="entry name" value="Ribosomal protein S18"/>
    <property type="match status" value="1"/>
</dbReference>
<dbReference type="PROSITE" id="PS00057">
    <property type="entry name" value="RIBOSOMAL_S18"/>
    <property type="match status" value="1"/>
</dbReference>
<gene>
    <name evidence="1" type="primary">rps18</name>
</gene>
<accession>Q85UY0</accession>
<comment type="subunit">
    <text>Part of the 30S ribosomal subunit.</text>
</comment>
<comment type="subcellular location">
    <subcellularLocation>
        <location>Plastid</location>
        <location>Chloroplast</location>
    </subcellularLocation>
</comment>
<comment type="similarity">
    <text evidence="1">Belongs to the bacterial ribosomal protein bS18 family.</text>
</comment>
<keyword id="KW-0150">Chloroplast</keyword>
<keyword id="KW-0934">Plastid</keyword>
<keyword id="KW-0687">Ribonucleoprotein</keyword>
<keyword id="KW-0689">Ribosomal protein</keyword>
<keyword id="KW-0694">RNA-binding</keyword>
<keyword id="KW-0699">rRNA-binding</keyword>